<sequence>MSSGNAYIGKLAPDFQATAVMPDGQFKEIKLSDYKGKYVVLFFYPLDFTFVCPTEIIAFSDRSEEFRKINCEVIGASVDSHFCHLAWINTPKKQGGLGSMHIPLVSDTKRVIAKDYGILKEDEGISYRGLFIIDDKGTLRQITINDLPVGRSVDETLRLVQAFQFTDKHGEVCPAGWQPGSDTIKPDVQKSKEYFSKHK</sequence>
<accession>Q6DV14</accession>
<feature type="chain" id="PRO_0000256854" description="Peroxiredoxin-1">
    <location>
        <begin position="1"/>
        <end position="199"/>
    </location>
</feature>
<feature type="domain" description="Thioredoxin" evidence="3">
    <location>
        <begin position="6"/>
        <end position="165"/>
    </location>
</feature>
<feature type="active site" description="Cysteine sulfenic acid (-SOH) intermediate" evidence="2">
    <location>
        <position position="52"/>
    </location>
</feature>
<feature type="disulfide bond" description="Interchain (with C-173); in linked form" evidence="2">
    <location>
        <position position="52"/>
    </location>
</feature>
<feature type="disulfide bond" description="Interchain (with C-52); in linked form" evidence="2">
    <location>
        <position position="173"/>
    </location>
</feature>
<dbReference type="EC" id="1.11.1.24" evidence="2"/>
<dbReference type="EMBL" id="AY626813">
    <property type="protein sequence ID" value="AAT85554.1"/>
    <property type="molecule type" value="mRNA"/>
</dbReference>
<dbReference type="EMBL" id="AY641835">
    <property type="protein sequence ID" value="AAT68217.1"/>
    <property type="molecule type" value="mRNA"/>
</dbReference>
<dbReference type="SMR" id="Q6DV14"/>
<dbReference type="Proteomes" id="UP000694871">
    <property type="component" value="Unplaced"/>
</dbReference>
<dbReference type="GO" id="GO:0005829">
    <property type="term" value="C:cytosol"/>
    <property type="evidence" value="ECO:0007669"/>
    <property type="project" value="TreeGrafter"/>
</dbReference>
<dbReference type="GO" id="GO:0008379">
    <property type="term" value="F:thioredoxin peroxidase activity"/>
    <property type="evidence" value="ECO:0007669"/>
    <property type="project" value="TreeGrafter"/>
</dbReference>
<dbReference type="GO" id="GO:0045454">
    <property type="term" value="P:cell redox homeostasis"/>
    <property type="evidence" value="ECO:0007669"/>
    <property type="project" value="TreeGrafter"/>
</dbReference>
<dbReference type="GO" id="GO:0042744">
    <property type="term" value="P:hydrogen peroxide catabolic process"/>
    <property type="evidence" value="ECO:0007669"/>
    <property type="project" value="TreeGrafter"/>
</dbReference>
<dbReference type="GO" id="GO:0045321">
    <property type="term" value="P:leukocyte activation"/>
    <property type="evidence" value="ECO:0007669"/>
    <property type="project" value="TreeGrafter"/>
</dbReference>
<dbReference type="GO" id="GO:0019430">
    <property type="term" value="P:removal of superoxide radicals"/>
    <property type="evidence" value="ECO:0007669"/>
    <property type="project" value="TreeGrafter"/>
</dbReference>
<dbReference type="CDD" id="cd03015">
    <property type="entry name" value="PRX_Typ2cys"/>
    <property type="match status" value="1"/>
</dbReference>
<dbReference type="FunFam" id="3.40.30.10:FF:000003">
    <property type="entry name" value="Peroxiredoxin 1"/>
    <property type="match status" value="1"/>
</dbReference>
<dbReference type="Gene3D" id="3.40.30.10">
    <property type="entry name" value="Glutaredoxin"/>
    <property type="match status" value="1"/>
</dbReference>
<dbReference type="InterPro" id="IPR000866">
    <property type="entry name" value="AhpC/TSA"/>
</dbReference>
<dbReference type="InterPro" id="IPR050217">
    <property type="entry name" value="Peroxiredoxin"/>
</dbReference>
<dbReference type="InterPro" id="IPR024706">
    <property type="entry name" value="Peroxiredoxin_AhpC-typ"/>
</dbReference>
<dbReference type="InterPro" id="IPR019479">
    <property type="entry name" value="Peroxiredoxin_C"/>
</dbReference>
<dbReference type="InterPro" id="IPR036249">
    <property type="entry name" value="Thioredoxin-like_sf"/>
</dbReference>
<dbReference type="InterPro" id="IPR013766">
    <property type="entry name" value="Thioredoxin_domain"/>
</dbReference>
<dbReference type="PANTHER" id="PTHR10681:SF111">
    <property type="entry name" value="PEROXIREDOXIN-1"/>
    <property type="match status" value="1"/>
</dbReference>
<dbReference type="PANTHER" id="PTHR10681">
    <property type="entry name" value="THIOREDOXIN PEROXIDASE"/>
    <property type="match status" value="1"/>
</dbReference>
<dbReference type="Pfam" id="PF10417">
    <property type="entry name" value="1-cysPrx_C"/>
    <property type="match status" value="1"/>
</dbReference>
<dbReference type="Pfam" id="PF00578">
    <property type="entry name" value="AhpC-TSA"/>
    <property type="match status" value="1"/>
</dbReference>
<dbReference type="PIRSF" id="PIRSF000239">
    <property type="entry name" value="AHPC"/>
    <property type="match status" value="1"/>
</dbReference>
<dbReference type="SUPFAM" id="SSF52833">
    <property type="entry name" value="Thioredoxin-like"/>
    <property type="match status" value="1"/>
</dbReference>
<dbReference type="PROSITE" id="PS51352">
    <property type="entry name" value="THIOREDOXIN_2"/>
    <property type="match status" value="1"/>
</dbReference>
<organism>
    <name type="scientific">Gekko japonicus</name>
    <name type="common">Schlegel's Japanese gecko</name>
    <dbReference type="NCBI Taxonomy" id="146911"/>
    <lineage>
        <taxon>Eukaryota</taxon>
        <taxon>Metazoa</taxon>
        <taxon>Chordata</taxon>
        <taxon>Craniata</taxon>
        <taxon>Vertebrata</taxon>
        <taxon>Euteleostomi</taxon>
        <taxon>Lepidosauria</taxon>
        <taxon>Squamata</taxon>
        <taxon>Bifurcata</taxon>
        <taxon>Gekkota</taxon>
        <taxon>Gekkonidae</taxon>
        <taxon>Gekkoninae</taxon>
        <taxon>Gekko</taxon>
    </lineage>
</organism>
<proteinExistence type="evidence at transcript level"/>
<keyword id="KW-0049">Antioxidant</keyword>
<keyword id="KW-0963">Cytoplasm</keyword>
<keyword id="KW-1015">Disulfide bond</keyword>
<keyword id="KW-0560">Oxidoreductase</keyword>
<keyword id="KW-0575">Peroxidase</keyword>
<keyword id="KW-0676">Redox-active center</keyword>
<evidence type="ECO:0000250" key="1">
    <source>
        <dbReference type="UniProtKB" id="P0CB50"/>
    </source>
</evidence>
<evidence type="ECO:0000250" key="2">
    <source>
        <dbReference type="UniProtKB" id="Q06830"/>
    </source>
</evidence>
<evidence type="ECO:0000255" key="3">
    <source>
        <dbReference type="PROSITE-ProRule" id="PRU00691"/>
    </source>
</evidence>
<evidence type="ECO:0000305" key="4"/>
<gene>
    <name type="primary">PRDX1</name>
    <name type="ORF">GekBS014P</name>
</gene>
<comment type="function">
    <text evidence="1 2">Thiol-specific peroxidase that catalyzes the reduction of hydrogen peroxide and organic hydroperoxides to water and alcohols, respectively. Plays a role in cell protection against oxidative stress by detoxifying peroxides and as sensor of hydrogen peroxide-mediated signaling events. Might participate in the signaling cascades of growth factors and tumor necrosis factor-alpha by regulating the intracellular concentrations of H(2)O(2) (By similarity). Reduces an intramolecular disulfide bond in GDPD5 that gates the ability to GDPD5 to drive postmitotic motor neuron differentiation (By similarity).</text>
</comment>
<comment type="catalytic activity">
    <reaction evidence="2">
        <text>a hydroperoxide + [thioredoxin]-dithiol = an alcohol + [thioredoxin]-disulfide + H2O</text>
        <dbReference type="Rhea" id="RHEA:62620"/>
        <dbReference type="Rhea" id="RHEA-COMP:10698"/>
        <dbReference type="Rhea" id="RHEA-COMP:10700"/>
        <dbReference type="ChEBI" id="CHEBI:15377"/>
        <dbReference type="ChEBI" id="CHEBI:29950"/>
        <dbReference type="ChEBI" id="CHEBI:30879"/>
        <dbReference type="ChEBI" id="CHEBI:35924"/>
        <dbReference type="ChEBI" id="CHEBI:50058"/>
        <dbReference type="EC" id="1.11.1.24"/>
    </reaction>
</comment>
<comment type="subunit">
    <text evidence="1 2">Homodimer; disulfide-linked, upon oxidation. 5 homodimers assemble to form a ring-like decamer (By similarity). Interacts with GDPD5; forms a mixed-disulfide with GDPD5 (By similarity). Interacts with SESN1 and SESN2 (By similarity). Interacts with FAM107A (By similarity).</text>
</comment>
<comment type="subcellular location">
    <subcellularLocation>
        <location evidence="2">Cytoplasm</location>
    </subcellularLocation>
</comment>
<comment type="PTM">
    <text evidence="2">The enzyme can be inactivated by further oxidation of the cysteine sulfenic acid (C(P)-SOH) to sulphinic acid (C(P)-SO2H) instead of its condensation to a disulfide bond. It can be reactivated by forming a transient disulfide bond with sulfiredoxin SRXN1, which reduces the cysteine sulfinic acid in an ATP- and Mg-dependent manner.</text>
</comment>
<comment type="miscellaneous">
    <text evidence="2">The active site is a conserved redox-active cysteine residue, the peroxidatic cysteine (C(P)), which makes the nucleophilic attack on the peroxide substrate. The peroxide oxidizes the C(P)-SH to cysteine sulfenic acid (C(P)-SOH), which then reacts with another cysteine residue, the resolving cysteine (C(R)), to form a disulfide bridge. The disulfide is subsequently reduced by an appropriate electron donor to complete the catalytic cycle. In this typical 2-Cys peroxiredoxin, C(R) is provided by the other dimeric subunit to form an intersubunit disulfide. The disulfide is subsequently reduced by thioredoxin.</text>
</comment>
<comment type="similarity">
    <text evidence="4">Belongs to the peroxiredoxin family. AhpC/Prx1 subfamily.</text>
</comment>
<protein>
    <recommendedName>
        <fullName>Peroxiredoxin-1</fullName>
        <ecNumber evidence="2">1.11.1.24</ecNumber>
    </recommendedName>
    <alternativeName>
        <fullName evidence="4">Thioredoxin-dependent peroxiredoxin 1</fullName>
    </alternativeName>
</protein>
<reference key="1">
    <citation type="submission" date="2004-08" db="EMBL/GenBank/DDBJ databases">
        <title>Analysis of expressed sequence tags and cloning of full length cDNA from brain and spinal cord cDNA library in Gecko.</title>
        <authorList>
            <person name="Ding F."/>
            <person name="Liu Y."/>
            <person name="Gu X."/>
            <person name="Tan X."/>
            <person name="Shen A."/>
            <person name="Zhang H."/>
            <person name="Liu M."/>
            <person name="Jiang M."/>
            <person name="Yang H."/>
        </authorList>
    </citation>
    <scope>NUCLEOTIDE SEQUENCE [LARGE SCALE MRNA]</scope>
    <source>
        <tissue>Brain</tissue>
        <tissue>Spinal cord</tissue>
    </source>
</reference>
<name>PRDX1_GEKJA</name>